<gene>
    <name evidence="1" type="primary">rpsF</name>
    <name type="ordered locus">DNO_1121</name>
</gene>
<protein>
    <recommendedName>
        <fullName evidence="1">Small ribosomal subunit protein bS6</fullName>
    </recommendedName>
    <alternativeName>
        <fullName evidence="2">30S ribosomal protein S6</fullName>
    </alternativeName>
</protein>
<comment type="function">
    <text evidence="1">Binds together with bS18 to 16S ribosomal RNA.</text>
</comment>
<comment type="similarity">
    <text evidence="1">Belongs to the bacterial ribosomal protein bS6 family.</text>
</comment>
<organism>
    <name type="scientific">Dichelobacter nodosus (strain VCS1703A)</name>
    <dbReference type="NCBI Taxonomy" id="246195"/>
    <lineage>
        <taxon>Bacteria</taxon>
        <taxon>Pseudomonadati</taxon>
        <taxon>Pseudomonadota</taxon>
        <taxon>Gammaproteobacteria</taxon>
        <taxon>Cardiobacteriales</taxon>
        <taxon>Cardiobacteriaceae</taxon>
        <taxon>Dichelobacter</taxon>
    </lineage>
</organism>
<name>RS6_DICNV</name>
<reference key="1">
    <citation type="journal article" date="2007" name="Nat. Biotechnol.">
        <title>Genome sequence and identification of candidate vaccine antigens from the animal pathogen Dichelobacter nodosus.</title>
        <authorList>
            <person name="Myers G.S.A."/>
            <person name="Parker D."/>
            <person name="Al-Hasani K."/>
            <person name="Kennan R.M."/>
            <person name="Seemann T."/>
            <person name="Ren Q."/>
            <person name="Badger J.H."/>
            <person name="Selengut J.D."/>
            <person name="Deboy R.T."/>
            <person name="Tettelin H."/>
            <person name="Boyce J.D."/>
            <person name="McCarl V.P."/>
            <person name="Han X."/>
            <person name="Nelson W.C."/>
            <person name="Madupu R."/>
            <person name="Mohamoud Y."/>
            <person name="Holley T."/>
            <person name="Fedorova N."/>
            <person name="Khouri H."/>
            <person name="Bottomley S.P."/>
            <person name="Whittington R.J."/>
            <person name="Adler B."/>
            <person name="Songer J.G."/>
            <person name="Rood J.I."/>
            <person name="Paulsen I.T."/>
        </authorList>
    </citation>
    <scope>NUCLEOTIDE SEQUENCE [LARGE SCALE GENOMIC DNA]</scope>
    <source>
        <strain>VCS1703A</strain>
    </source>
</reference>
<sequence>MRHYEIVFLVHPDQSEQVSAMVERYRAQIEAAQGKVHRLEDWGRRVLAYPIQKLVKAHYILMNIECDRQTLAELESNFRFNDAILRHMIIRRDEAVTEASMMMQEVKK</sequence>
<proteinExistence type="inferred from homology"/>
<keyword id="KW-1185">Reference proteome</keyword>
<keyword id="KW-0687">Ribonucleoprotein</keyword>
<keyword id="KW-0689">Ribosomal protein</keyword>
<keyword id="KW-0694">RNA-binding</keyword>
<keyword id="KW-0699">rRNA-binding</keyword>
<accession>A5EXN1</accession>
<evidence type="ECO:0000255" key="1">
    <source>
        <dbReference type="HAMAP-Rule" id="MF_00360"/>
    </source>
</evidence>
<evidence type="ECO:0000305" key="2"/>
<dbReference type="EMBL" id="CP000513">
    <property type="protein sequence ID" value="ABQ13474.1"/>
    <property type="molecule type" value="Genomic_DNA"/>
</dbReference>
<dbReference type="RefSeq" id="WP_012031425.1">
    <property type="nucleotide sequence ID" value="NC_009446.1"/>
</dbReference>
<dbReference type="SMR" id="A5EXN1"/>
<dbReference type="STRING" id="246195.DNO_1121"/>
<dbReference type="KEGG" id="dno:DNO_1121"/>
<dbReference type="eggNOG" id="COG0360">
    <property type="taxonomic scope" value="Bacteria"/>
</dbReference>
<dbReference type="HOGENOM" id="CLU_113441_6_1_6"/>
<dbReference type="OrthoDB" id="9812702at2"/>
<dbReference type="Proteomes" id="UP000000248">
    <property type="component" value="Chromosome"/>
</dbReference>
<dbReference type="GO" id="GO:0022627">
    <property type="term" value="C:cytosolic small ribosomal subunit"/>
    <property type="evidence" value="ECO:0007669"/>
    <property type="project" value="TreeGrafter"/>
</dbReference>
<dbReference type="GO" id="GO:0070181">
    <property type="term" value="F:small ribosomal subunit rRNA binding"/>
    <property type="evidence" value="ECO:0007669"/>
    <property type="project" value="TreeGrafter"/>
</dbReference>
<dbReference type="GO" id="GO:0003735">
    <property type="term" value="F:structural constituent of ribosome"/>
    <property type="evidence" value="ECO:0007669"/>
    <property type="project" value="InterPro"/>
</dbReference>
<dbReference type="GO" id="GO:0006412">
    <property type="term" value="P:translation"/>
    <property type="evidence" value="ECO:0007669"/>
    <property type="project" value="UniProtKB-UniRule"/>
</dbReference>
<dbReference type="CDD" id="cd00473">
    <property type="entry name" value="bS6"/>
    <property type="match status" value="1"/>
</dbReference>
<dbReference type="Gene3D" id="3.30.70.60">
    <property type="match status" value="1"/>
</dbReference>
<dbReference type="HAMAP" id="MF_00360">
    <property type="entry name" value="Ribosomal_bS6"/>
    <property type="match status" value="1"/>
</dbReference>
<dbReference type="InterPro" id="IPR000529">
    <property type="entry name" value="Ribosomal_bS6"/>
</dbReference>
<dbReference type="InterPro" id="IPR035980">
    <property type="entry name" value="Ribosomal_bS6_sf"/>
</dbReference>
<dbReference type="InterPro" id="IPR020814">
    <property type="entry name" value="Ribosomal_S6_plastid/chlpt"/>
</dbReference>
<dbReference type="InterPro" id="IPR014717">
    <property type="entry name" value="Transl_elong_EF1B/ribsomal_bS6"/>
</dbReference>
<dbReference type="NCBIfam" id="TIGR00166">
    <property type="entry name" value="S6"/>
    <property type="match status" value="1"/>
</dbReference>
<dbReference type="PANTHER" id="PTHR21011">
    <property type="entry name" value="MITOCHONDRIAL 28S RIBOSOMAL PROTEIN S6"/>
    <property type="match status" value="1"/>
</dbReference>
<dbReference type="PANTHER" id="PTHR21011:SF1">
    <property type="entry name" value="SMALL RIBOSOMAL SUBUNIT PROTEIN BS6M"/>
    <property type="match status" value="1"/>
</dbReference>
<dbReference type="Pfam" id="PF01250">
    <property type="entry name" value="Ribosomal_S6"/>
    <property type="match status" value="1"/>
</dbReference>
<dbReference type="SUPFAM" id="SSF54995">
    <property type="entry name" value="Ribosomal protein S6"/>
    <property type="match status" value="1"/>
</dbReference>
<feature type="chain" id="PRO_1000005257" description="Small ribosomal subunit protein bS6">
    <location>
        <begin position="1"/>
        <end position="108"/>
    </location>
</feature>